<accession>Q5HM62</accession>
<organism>
    <name type="scientific">Staphylococcus epidermidis (strain ATCC 35984 / DSM 28319 / BCRC 17069 / CCUG 31568 / BM 3577 / RP62A)</name>
    <dbReference type="NCBI Taxonomy" id="176279"/>
    <lineage>
        <taxon>Bacteria</taxon>
        <taxon>Bacillati</taxon>
        <taxon>Bacillota</taxon>
        <taxon>Bacilli</taxon>
        <taxon>Bacillales</taxon>
        <taxon>Staphylococcaceae</taxon>
        <taxon>Staphylococcus</taxon>
    </lineage>
</organism>
<protein>
    <recommendedName>
        <fullName>Multidrug resistance efflux pump SepA</fullName>
    </recommendedName>
    <alternativeName>
        <fullName>Antiseptic resistance protein SepA</fullName>
    </alternativeName>
    <alternativeName>
        <fullName>Staphylococcal efflux pump A</fullName>
    </alternativeName>
</protein>
<sequence length="155" mass="18447">MKFLKNKSYHLLVTLIVLTIFVISGAIFLTFLGFGLYGLSRILIYLHLGDFSYNKGFYDNLIYYGSYIVLGYFTLFSIEHLMDYFKKNLPKNPYFQGINFHLISYIVTTIMFYFIVHIHYVHVNIHFWVIMIIIGFLFVCKEVFYPESKNLNNKK</sequence>
<dbReference type="EMBL" id="CP000029">
    <property type="protein sequence ID" value="AAW55118.1"/>
    <property type="status" value="ALT_INIT"/>
    <property type="molecule type" value="Genomic_DNA"/>
</dbReference>
<dbReference type="RefSeq" id="WP_001829729.1">
    <property type="nucleotide sequence ID" value="NC_002976.3"/>
</dbReference>
<dbReference type="STRING" id="176279.SERP1767"/>
<dbReference type="KEGG" id="ser:SERP1767"/>
<dbReference type="eggNOG" id="ENOG5033YVE">
    <property type="taxonomic scope" value="Bacteria"/>
</dbReference>
<dbReference type="HOGENOM" id="CLU_151983_0_0_9"/>
<dbReference type="Proteomes" id="UP000000531">
    <property type="component" value="Chromosome"/>
</dbReference>
<dbReference type="GO" id="GO:0005886">
    <property type="term" value="C:plasma membrane"/>
    <property type="evidence" value="ECO:0007669"/>
    <property type="project" value="UniProtKB-SubCell"/>
</dbReference>
<dbReference type="InterPro" id="IPR031396">
    <property type="entry name" value="SepA"/>
</dbReference>
<dbReference type="Pfam" id="PF17080">
    <property type="entry name" value="SepA"/>
    <property type="match status" value="1"/>
</dbReference>
<keyword id="KW-1003">Cell membrane</keyword>
<keyword id="KW-0472">Membrane</keyword>
<keyword id="KW-1185">Reference proteome</keyword>
<keyword id="KW-0812">Transmembrane</keyword>
<keyword id="KW-1133">Transmembrane helix</keyword>
<keyword id="KW-0813">Transport</keyword>
<reference key="1">
    <citation type="journal article" date="2005" name="J. Bacteriol.">
        <title>Insights on evolution of virulence and resistance from the complete genome analysis of an early methicillin-resistant Staphylococcus aureus strain and a biofilm-producing methicillin-resistant Staphylococcus epidermidis strain.</title>
        <authorList>
            <person name="Gill S.R."/>
            <person name="Fouts D.E."/>
            <person name="Archer G.L."/>
            <person name="Mongodin E.F."/>
            <person name="DeBoy R.T."/>
            <person name="Ravel J."/>
            <person name="Paulsen I.T."/>
            <person name="Kolonay J.F."/>
            <person name="Brinkac L.M."/>
            <person name="Beanan M.J."/>
            <person name="Dodson R.J."/>
            <person name="Daugherty S.C."/>
            <person name="Madupu R."/>
            <person name="Angiuoli S.V."/>
            <person name="Durkin A.S."/>
            <person name="Haft D.H."/>
            <person name="Vamathevan J.J."/>
            <person name="Khouri H."/>
            <person name="Utterback T.R."/>
            <person name="Lee C."/>
            <person name="Dimitrov G."/>
            <person name="Jiang L."/>
            <person name="Qin H."/>
            <person name="Weidman J."/>
            <person name="Tran K."/>
            <person name="Kang K.H."/>
            <person name="Hance I.R."/>
            <person name="Nelson K.E."/>
            <person name="Fraser C.M."/>
        </authorList>
    </citation>
    <scope>NUCLEOTIDE SEQUENCE [LARGE SCALE GENOMIC DNA]</scope>
    <source>
        <strain>ATCC 35984 / DSM 28319 / BCRC 17069 / CCUG 31568 / BM 3577 / RP62A</strain>
    </source>
</reference>
<gene>
    <name type="primary">sepA</name>
    <name type="ordered locus">SERP1767</name>
</gene>
<evidence type="ECO:0000250" key="1"/>
<evidence type="ECO:0000255" key="2"/>
<evidence type="ECO:0000305" key="3"/>
<name>MDEP_STAEQ</name>
<feature type="chain" id="PRO_0000351496" description="Multidrug resistance efflux pump SepA">
    <location>
        <begin position="1"/>
        <end position="155"/>
    </location>
</feature>
<feature type="transmembrane region" description="Helical" evidence="2">
    <location>
        <begin position="15"/>
        <end position="35"/>
    </location>
</feature>
<feature type="transmembrane region" description="Helical" evidence="2">
    <location>
        <begin position="61"/>
        <end position="81"/>
    </location>
</feature>
<feature type="transmembrane region" description="Helical" evidence="2">
    <location>
        <begin position="98"/>
        <end position="118"/>
    </location>
</feature>
<feature type="transmembrane region" description="Helical" evidence="2">
    <location>
        <begin position="120"/>
        <end position="140"/>
    </location>
</feature>
<proteinExistence type="inferred from homology"/>
<comment type="function">
    <text evidence="1">Involved in multidrug efflux.</text>
</comment>
<comment type="subcellular location">
    <subcellularLocation>
        <location evidence="3">Cell membrane</location>
        <topology evidence="3">Multi-pass membrane protein</topology>
    </subcellularLocation>
</comment>
<comment type="similarity">
    <text evidence="3">Belongs to the multidrug resistance efflux pump SepA family.</text>
</comment>
<comment type="sequence caution" evidence="3">
    <conflict type="erroneous initiation">
        <sequence resource="EMBL-CDS" id="AAW55118"/>
    </conflict>
</comment>